<protein>
    <recommendedName>
        <fullName>Keratin, high-sulfur matrix protein, B2B</fullName>
    </recommendedName>
</protein>
<dbReference type="PIR" id="A02838">
    <property type="entry name" value="KRSHHB"/>
</dbReference>
<dbReference type="STRING" id="9940.ENSOARP00000000074"/>
<dbReference type="iPTMnet" id="P02439"/>
<dbReference type="eggNOG" id="KOG4726">
    <property type="taxonomic scope" value="Eukaryota"/>
</dbReference>
<dbReference type="Proteomes" id="UP000002356">
    <property type="component" value="Unplaced"/>
</dbReference>
<dbReference type="GO" id="GO:0005829">
    <property type="term" value="C:cytosol"/>
    <property type="evidence" value="ECO:0007669"/>
    <property type="project" value="UniProtKB-ARBA"/>
</dbReference>
<dbReference type="GO" id="GO:0045095">
    <property type="term" value="C:keratin filament"/>
    <property type="evidence" value="ECO:0007669"/>
    <property type="project" value="InterPro"/>
</dbReference>
<dbReference type="InterPro" id="IPR002494">
    <property type="entry name" value="KAP"/>
</dbReference>
<dbReference type="Pfam" id="PF01500">
    <property type="entry name" value="Keratin_B2"/>
    <property type="match status" value="1"/>
</dbReference>
<sequence length="156" mass="16040">ACCSTSFCGFPICSSVGTCGSSCGQPTCSQTSCCQPTSIQTSCCQPISIQTSCCQPTCLQTSGCETGCGIGGSIGYDQVGSSGAVSSRTRWCRPDCRVEGTSLPPCCVVSCTSPSCCQLYYAQASCCRPSYCGQSCCRPACCCQPTCIEPVCEPTC</sequence>
<organism>
    <name type="scientific">Ovis aries</name>
    <name type="common">Sheep</name>
    <dbReference type="NCBI Taxonomy" id="9940"/>
    <lineage>
        <taxon>Eukaryota</taxon>
        <taxon>Metazoa</taxon>
        <taxon>Chordata</taxon>
        <taxon>Craniata</taxon>
        <taxon>Vertebrata</taxon>
        <taxon>Euteleostomi</taxon>
        <taxon>Mammalia</taxon>
        <taxon>Eutheria</taxon>
        <taxon>Laurasiatheria</taxon>
        <taxon>Artiodactyla</taxon>
        <taxon>Ruminantia</taxon>
        <taxon>Pecora</taxon>
        <taxon>Bovidae</taxon>
        <taxon>Caprinae</taxon>
        <taxon>Ovis</taxon>
    </lineage>
</organism>
<keyword id="KW-0007">Acetylation</keyword>
<keyword id="KW-0903">Direct protein sequencing</keyword>
<keyword id="KW-0416">Keratin</keyword>
<keyword id="KW-1185">Reference proteome</keyword>
<keyword id="KW-0677">Repeat</keyword>
<reference key="1">
    <citation type="journal article" date="1972" name="J. Biol. Chem.">
        <title>The sequence of SCMK-B2B, a high-sulfur protein from wool keratin.</title>
        <authorList>
            <person name="Elleman T.C."/>
            <person name="Dopheide T.A."/>
        </authorList>
    </citation>
    <scope>PROTEIN SEQUENCE</scope>
    <scope>ACETYLATION AT ALA-1</scope>
</reference>
<evidence type="ECO:0000269" key="1">
    <source>
    </source>
</evidence>
<proteinExistence type="evidence at protein level"/>
<comment type="function">
    <text>The keratin products of mammalian epidermal derivatives such as wool and hair consist of microfibrils embedded in a rigid matrix of other proteins. The matrix proteins include the high-sulfur and high-tyrosine keratins, having molecular weights of 6-20 kDa, whereas the microfibrils contain the larger, low-sulfur keratins (40-56 kDa).</text>
</comment>
<comment type="miscellaneous">
    <text>The source of this keratin is lincoln wool.</text>
</comment>
<name>KRB2B_SHEEP</name>
<feature type="chain" id="PRO_0000084325" description="Keratin, high-sulfur matrix protein, B2B">
    <location>
        <begin position="1"/>
        <end position="156"/>
    </location>
</feature>
<feature type="repeat">
    <location>
        <begin position="26"/>
        <end position="35"/>
    </location>
</feature>
<feature type="repeat">
    <location>
        <begin position="36"/>
        <end position="45"/>
    </location>
</feature>
<feature type="repeat">
    <location>
        <begin position="46"/>
        <end position="55"/>
    </location>
</feature>
<feature type="repeat">
    <location>
        <begin position="56"/>
        <end position="65"/>
    </location>
</feature>
<feature type="modified residue" description="N-acetylalanine" evidence="1">
    <location>
        <position position="1"/>
    </location>
</feature>
<feature type="sequence variant" description="In minor component.">
    <original>D</original>
    <variation>G</variation>
    <location>
        <position position="77"/>
    </location>
</feature>
<accession>P02439</accession>